<feature type="chain" id="PRO_0000146889" description="Adenosylcobinamide-GDP ribazoletransferase">
    <location>
        <begin position="1"/>
        <end position="240"/>
    </location>
</feature>
<feature type="transmembrane region" description="Helical" evidence="1">
    <location>
        <begin position="31"/>
        <end position="51"/>
    </location>
</feature>
<feature type="transmembrane region" description="Helical" evidence="1">
    <location>
        <begin position="62"/>
        <end position="81"/>
    </location>
</feature>
<feature type="transmembrane region" description="Helical" evidence="1">
    <location>
        <begin position="109"/>
        <end position="129"/>
    </location>
</feature>
<feature type="transmembrane region" description="Helical" evidence="1">
    <location>
        <begin position="133"/>
        <end position="153"/>
    </location>
</feature>
<feature type="transmembrane region" description="Helical" evidence="1">
    <location>
        <begin position="179"/>
        <end position="199"/>
    </location>
</feature>
<sequence length="240" mass="25651">MLPFWIALQFLSSLPVSLPGMPAPREVGRSLLYYPLVGLLFGLLLWLASHLLQGTPSPLHAALLLTLWVLLSGALHLDGLADSADAWLGGFGDRERTLRIMKDPRSGPIAVVTLVLVLLLKFCALWVLVGQGIGAQLLLAPLIGRAAMLGLFLCTPYVRPGGLGQALAEHMPRRAAGWVLLVCVLFCLFLGGWSVLLALAVFAWLRHLMCRRLGGTTGDTAGALLELLELAVVLGLALGL</sequence>
<organism>
    <name type="scientific">Pseudomonas putida (strain ATCC 47054 / DSM 6125 / CFBP 8728 / NCIMB 11950 / KT2440)</name>
    <dbReference type="NCBI Taxonomy" id="160488"/>
    <lineage>
        <taxon>Bacteria</taxon>
        <taxon>Pseudomonadati</taxon>
        <taxon>Pseudomonadota</taxon>
        <taxon>Gammaproteobacteria</taxon>
        <taxon>Pseudomonadales</taxon>
        <taxon>Pseudomonadaceae</taxon>
        <taxon>Pseudomonas</taxon>
    </lineage>
</organism>
<dbReference type="EC" id="2.7.8.26" evidence="1"/>
<dbReference type="EMBL" id="AE015451">
    <property type="protein sequence ID" value="AAN67302.1"/>
    <property type="status" value="ALT_INIT"/>
    <property type="molecule type" value="Genomic_DNA"/>
</dbReference>
<dbReference type="RefSeq" id="NP_743838.1">
    <property type="nucleotide sequence ID" value="NC_002947.4"/>
</dbReference>
<dbReference type="RefSeq" id="WP_014860997.1">
    <property type="nucleotide sequence ID" value="NZ_CP169744.1"/>
</dbReference>
<dbReference type="STRING" id="160488.PP_1681"/>
<dbReference type="PaxDb" id="160488-PP_1681"/>
<dbReference type="KEGG" id="ppu:PP_1681"/>
<dbReference type="PATRIC" id="fig|160488.4.peg.1774"/>
<dbReference type="eggNOG" id="COG0368">
    <property type="taxonomic scope" value="Bacteria"/>
</dbReference>
<dbReference type="HOGENOM" id="CLU_057426_3_1_6"/>
<dbReference type="OrthoDB" id="9794626at2"/>
<dbReference type="PhylomeDB" id="Q88M93"/>
<dbReference type="UniPathway" id="UPA00148">
    <property type="reaction ID" value="UER00238"/>
</dbReference>
<dbReference type="Proteomes" id="UP000000556">
    <property type="component" value="Chromosome"/>
</dbReference>
<dbReference type="GO" id="GO:0005886">
    <property type="term" value="C:plasma membrane"/>
    <property type="evidence" value="ECO:0007669"/>
    <property type="project" value="UniProtKB-SubCell"/>
</dbReference>
<dbReference type="GO" id="GO:0051073">
    <property type="term" value="F:adenosylcobinamide-GDP ribazoletransferase activity"/>
    <property type="evidence" value="ECO:0007669"/>
    <property type="project" value="UniProtKB-UniRule"/>
</dbReference>
<dbReference type="GO" id="GO:0008818">
    <property type="term" value="F:cobalamin 5'-phosphate synthase activity"/>
    <property type="evidence" value="ECO:0007669"/>
    <property type="project" value="UniProtKB-UniRule"/>
</dbReference>
<dbReference type="GO" id="GO:0009236">
    <property type="term" value="P:cobalamin biosynthetic process"/>
    <property type="evidence" value="ECO:0007669"/>
    <property type="project" value="UniProtKB-UniRule"/>
</dbReference>
<dbReference type="HAMAP" id="MF_00719">
    <property type="entry name" value="CobS"/>
    <property type="match status" value="1"/>
</dbReference>
<dbReference type="InterPro" id="IPR003805">
    <property type="entry name" value="CobS"/>
</dbReference>
<dbReference type="NCBIfam" id="TIGR00317">
    <property type="entry name" value="cobS"/>
    <property type="match status" value="1"/>
</dbReference>
<dbReference type="NCBIfam" id="NF001278">
    <property type="entry name" value="PRK00235.1-5"/>
    <property type="match status" value="1"/>
</dbReference>
<dbReference type="PANTHER" id="PTHR34148">
    <property type="entry name" value="ADENOSYLCOBINAMIDE-GDP RIBAZOLETRANSFERASE"/>
    <property type="match status" value="1"/>
</dbReference>
<dbReference type="PANTHER" id="PTHR34148:SF1">
    <property type="entry name" value="ADENOSYLCOBINAMIDE-GDP RIBAZOLETRANSFERASE"/>
    <property type="match status" value="1"/>
</dbReference>
<dbReference type="Pfam" id="PF02654">
    <property type="entry name" value="CobS"/>
    <property type="match status" value="1"/>
</dbReference>
<accession>Q88M93</accession>
<comment type="function">
    <text evidence="1">Joins adenosylcobinamide-GDP and alpha-ribazole to generate adenosylcobalamin (Ado-cobalamin). Also synthesizes adenosylcobalamin 5'-phosphate from adenosylcobinamide-GDP and alpha-ribazole 5'-phosphate.</text>
</comment>
<comment type="catalytic activity">
    <reaction evidence="1">
        <text>alpha-ribazole + adenosylcob(III)inamide-GDP = adenosylcob(III)alamin + GMP + H(+)</text>
        <dbReference type="Rhea" id="RHEA:16049"/>
        <dbReference type="ChEBI" id="CHEBI:10329"/>
        <dbReference type="ChEBI" id="CHEBI:15378"/>
        <dbReference type="ChEBI" id="CHEBI:18408"/>
        <dbReference type="ChEBI" id="CHEBI:58115"/>
        <dbReference type="ChEBI" id="CHEBI:60487"/>
        <dbReference type="EC" id="2.7.8.26"/>
    </reaction>
</comment>
<comment type="catalytic activity">
    <reaction evidence="1">
        <text>alpha-ribazole 5'-phosphate + adenosylcob(III)inamide-GDP = adenosylcob(III)alamin 5'-phosphate + GMP + H(+)</text>
        <dbReference type="Rhea" id="RHEA:23560"/>
        <dbReference type="ChEBI" id="CHEBI:15378"/>
        <dbReference type="ChEBI" id="CHEBI:57918"/>
        <dbReference type="ChEBI" id="CHEBI:58115"/>
        <dbReference type="ChEBI" id="CHEBI:60487"/>
        <dbReference type="ChEBI" id="CHEBI:60493"/>
        <dbReference type="EC" id="2.7.8.26"/>
    </reaction>
</comment>
<comment type="cofactor">
    <cofactor evidence="1">
        <name>Mg(2+)</name>
        <dbReference type="ChEBI" id="CHEBI:18420"/>
    </cofactor>
</comment>
<comment type="pathway">
    <text evidence="1">Cofactor biosynthesis; adenosylcobalamin biosynthesis; adenosylcobalamin from cob(II)yrinate a,c-diamide: step 7/7.</text>
</comment>
<comment type="subcellular location">
    <subcellularLocation>
        <location evidence="1">Cell inner membrane</location>
        <topology evidence="1">Multi-pass membrane protein</topology>
    </subcellularLocation>
</comment>
<comment type="similarity">
    <text evidence="1">Belongs to the CobS family.</text>
</comment>
<comment type="sequence caution" evidence="2">
    <conflict type="erroneous initiation">
        <sequence resource="EMBL-CDS" id="AAN67302"/>
    </conflict>
</comment>
<evidence type="ECO:0000255" key="1">
    <source>
        <dbReference type="HAMAP-Rule" id="MF_00719"/>
    </source>
</evidence>
<evidence type="ECO:0000305" key="2"/>
<proteinExistence type="inferred from homology"/>
<reference key="1">
    <citation type="journal article" date="2002" name="Environ. Microbiol.">
        <title>Complete genome sequence and comparative analysis of the metabolically versatile Pseudomonas putida KT2440.</title>
        <authorList>
            <person name="Nelson K.E."/>
            <person name="Weinel C."/>
            <person name="Paulsen I.T."/>
            <person name="Dodson R.J."/>
            <person name="Hilbert H."/>
            <person name="Martins dos Santos V.A.P."/>
            <person name="Fouts D.E."/>
            <person name="Gill S.R."/>
            <person name="Pop M."/>
            <person name="Holmes M."/>
            <person name="Brinkac L.M."/>
            <person name="Beanan M.J."/>
            <person name="DeBoy R.T."/>
            <person name="Daugherty S.C."/>
            <person name="Kolonay J.F."/>
            <person name="Madupu R."/>
            <person name="Nelson W.C."/>
            <person name="White O."/>
            <person name="Peterson J.D."/>
            <person name="Khouri H.M."/>
            <person name="Hance I."/>
            <person name="Chris Lee P."/>
            <person name="Holtzapple E.K."/>
            <person name="Scanlan D."/>
            <person name="Tran K."/>
            <person name="Moazzez A."/>
            <person name="Utterback T.R."/>
            <person name="Rizzo M."/>
            <person name="Lee K."/>
            <person name="Kosack D."/>
            <person name="Moestl D."/>
            <person name="Wedler H."/>
            <person name="Lauber J."/>
            <person name="Stjepandic D."/>
            <person name="Hoheisel J."/>
            <person name="Straetz M."/>
            <person name="Heim S."/>
            <person name="Kiewitz C."/>
            <person name="Eisen J.A."/>
            <person name="Timmis K.N."/>
            <person name="Duesterhoeft A."/>
            <person name="Tuemmler B."/>
            <person name="Fraser C.M."/>
        </authorList>
    </citation>
    <scope>NUCLEOTIDE SEQUENCE [LARGE SCALE GENOMIC DNA]</scope>
    <source>
        <strain>ATCC 47054 / DSM 6125 / CFBP 8728 / NCIMB 11950 / KT2440</strain>
    </source>
</reference>
<name>COBS_PSEPK</name>
<gene>
    <name evidence="1" type="primary">cobS</name>
    <name type="ordered locus">PP_1681</name>
</gene>
<protein>
    <recommendedName>
        <fullName evidence="1">Adenosylcobinamide-GDP ribazoletransferase</fullName>
        <ecNumber evidence="1">2.7.8.26</ecNumber>
    </recommendedName>
    <alternativeName>
        <fullName evidence="1">Cobalamin synthase</fullName>
    </alternativeName>
    <alternativeName>
        <fullName evidence="1">Cobalamin-5'-phosphate synthase</fullName>
    </alternativeName>
</protein>
<keyword id="KW-0997">Cell inner membrane</keyword>
<keyword id="KW-1003">Cell membrane</keyword>
<keyword id="KW-0169">Cobalamin biosynthesis</keyword>
<keyword id="KW-0460">Magnesium</keyword>
<keyword id="KW-0472">Membrane</keyword>
<keyword id="KW-1185">Reference proteome</keyword>
<keyword id="KW-0808">Transferase</keyword>
<keyword id="KW-0812">Transmembrane</keyword>
<keyword id="KW-1133">Transmembrane helix</keyword>